<gene>
    <name evidence="17 21" type="primary">Micu1</name>
    <name evidence="17" type="synonym">Cbara1</name>
</gene>
<dbReference type="EMBL" id="AK046049">
    <property type="protein sequence ID" value="BAC32581.1"/>
    <property type="molecule type" value="mRNA"/>
</dbReference>
<dbReference type="EMBL" id="AK049521">
    <property type="protein sequence ID" value="BAC33792.1"/>
    <property type="molecule type" value="mRNA"/>
</dbReference>
<dbReference type="EMBL" id="AK050113">
    <property type="protein sequence ID" value="BAC34073.1"/>
    <property type="molecule type" value="mRNA"/>
</dbReference>
<dbReference type="EMBL" id="AK052485">
    <property type="protein sequence ID" value="BAC35013.1"/>
    <property type="molecule type" value="mRNA"/>
</dbReference>
<dbReference type="EMBL" id="AK077605">
    <property type="protein sequence ID" value="BAC36895.1"/>
    <property type="molecule type" value="mRNA"/>
</dbReference>
<dbReference type="EMBL" id="BC018320">
    <property type="protein sequence ID" value="AAH18320.1"/>
    <property type="molecule type" value="mRNA"/>
</dbReference>
<dbReference type="EMBL" id="BC023022">
    <property type="protein sequence ID" value="AAH23022.1"/>
    <property type="molecule type" value="mRNA"/>
</dbReference>
<dbReference type="EMBL" id="BC023042">
    <property type="protein sequence ID" value="AAH23042.1"/>
    <property type="molecule type" value="mRNA"/>
</dbReference>
<dbReference type="EMBL" id="BC026566">
    <property type="protein sequence ID" value="AAH26566.1"/>
    <property type="molecule type" value="mRNA"/>
</dbReference>
<dbReference type="CCDS" id="CCDS35909.1">
    <molecule id="Q8VCX5-1"/>
</dbReference>
<dbReference type="CCDS" id="CCDS78817.1">
    <molecule id="Q8VCX5-2"/>
</dbReference>
<dbReference type="CCDS" id="CCDS78818.1">
    <molecule id="Q8VCX5-3"/>
</dbReference>
<dbReference type="RefSeq" id="NP_001278371.1">
    <molecule id="Q8VCX5-2"/>
    <property type="nucleotide sequence ID" value="NM_001291442.1"/>
</dbReference>
<dbReference type="RefSeq" id="NP_001278372.1">
    <molecule id="Q8VCX5-3"/>
    <property type="nucleotide sequence ID" value="NM_001291443.1"/>
</dbReference>
<dbReference type="RefSeq" id="NP_659071.1">
    <molecule id="Q8VCX5-1"/>
    <property type="nucleotide sequence ID" value="NM_144822.3"/>
</dbReference>
<dbReference type="SMR" id="Q8VCX5"/>
<dbReference type="BioGRID" id="229685">
    <property type="interactions" value="15"/>
</dbReference>
<dbReference type="FunCoup" id="Q8VCX5">
    <property type="interactions" value="1732"/>
</dbReference>
<dbReference type="STRING" id="10090.ENSMUSP00000020311"/>
<dbReference type="GlyGen" id="Q8VCX5">
    <property type="glycosylation" value="1 site, 1 O-linked glycan (1 site)"/>
</dbReference>
<dbReference type="iPTMnet" id="Q8VCX5"/>
<dbReference type="PhosphoSitePlus" id="Q8VCX5"/>
<dbReference type="SwissPalm" id="Q8VCX5"/>
<dbReference type="PaxDb" id="10090-ENSMUSP00000126597"/>
<dbReference type="PeptideAtlas" id="Q8VCX5"/>
<dbReference type="ProteomicsDB" id="252560">
    <molecule id="Q8VCX5-1"/>
</dbReference>
<dbReference type="ProteomicsDB" id="252561">
    <molecule id="Q8VCX5-2"/>
</dbReference>
<dbReference type="ProteomicsDB" id="252562">
    <molecule id="Q8VCX5-3"/>
</dbReference>
<dbReference type="Pumba" id="Q8VCX5"/>
<dbReference type="Antibodypedia" id="29257">
    <property type="antibodies" value="182 antibodies from 28 providers"/>
</dbReference>
<dbReference type="DNASU" id="216001"/>
<dbReference type="Ensembl" id="ENSMUST00000020311.13">
    <molecule id="Q8VCX5-2"/>
    <property type="protein sequence ID" value="ENSMUSP00000020311.7"/>
    <property type="gene ID" value="ENSMUSG00000020111.17"/>
</dbReference>
<dbReference type="Ensembl" id="ENSMUST00000092508.12">
    <molecule id="Q8VCX5-3"/>
    <property type="protein sequence ID" value="ENSMUSP00000090166.6"/>
    <property type="gene ID" value="ENSMUSG00000020111.17"/>
</dbReference>
<dbReference type="Ensembl" id="ENSMUST00000165563.8">
    <molecule id="Q8VCX5-1"/>
    <property type="protein sequence ID" value="ENSMUSP00000126597.2"/>
    <property type="gene ID" value="ENSMUSG00000020111.17"/>
</dbReference>
<dbReference type="GeneID" id="216001"/>
<dbReference type="KEGG" id="mmu:216001"/>
<dbReference type="UCSC" id="uc007fdx.2">
    <molecule id="Q8VCX5-1"/>
    <property type="organism name" value="mouse"/>
</dbReference>
<dbReference type="UCSC" id="uc007fdy.2">
    <molecule id="Q8VCX5-3"/>
    <property type="organism name" value="mouse"/>
</dbReference>
<dbReference type="AGR" id="MGI:2384909"/>
<dbReference type="CTD" id="10367"/>
<dbReference type="MGI" id="MGI:2384909">
    <property type="gene designation" value="Micu1"/>
</dbReference>
<dbReference type="VEuPathDB" id="HostDB:ENSMUSG00000020111"/>
<dbReference type="eggNOG" id="KOG2643">
    <property type="taxonomic scope" value="Eukaryota"/>
</dbReference>
<dbReference type="GeneTree" id="ENSGT00950000183079"/>
<dbReference type="HOGENOM" id="CLU_027103_3_1_1"/>
<dbReference type="InParanoid" id="Q8VCX5"/>
<dbReference type="OMA" id="YPEYMFF"/>
<dbReference type="OrthoDB" id="13294at9989"/>
<dbReference type="PhylomeDB" id="Q8VCX5"/>
<dbReference type="TreeFam" id="TF313815"/>
<dbReference type="Reactome" id="R-MMU-8949215">
    <property type="pathway name" value="Mitochondrial calcium ion transport"/>
</dbReference>
<dbReference type="Reactome" id="R-MMU-8949664">
    <property type="pathway name" value="Processing of SMDT1"/>
</dbReference>
<dbReference type="BioGRID-ORCS" id="216001">
    <property type="hits" value="10 hits in 76 CRISPR screens"/>
</dbReference>
<dbReference type="ChiTaRS" id="Micu1">
    <property type="organism name" value="mouse"/>
</dbReference>
<dbReference type="PRO" id="PR:Q8VCX5"/>
<dbReference type="Proteomes" id="UP000000589">
    <property type="component" value="Chromosome 10"/>
</dbReference>
<dbReference type="RNAct" id="Q8VCX5">
    <property type="molecule type" value="protein"/>
</dbReference>
<dbReference type="Bgee" id="ENSMUSG00000020111">
    <property type="expression patterns" value="Expressed in intestinal villus and 248 other cell types or tissues"/>
</dbReference>
<dbReference type="ExpressionAtlas" id="Q8VCX5">
    <property type="expression patterns" value="baseline and differential"/>
</dbReference>
<dbReference type="GO" id="GO:0034704">
    <property type="term" value="C:calcium channel complex"/>
    <property type="evidence" value="ECO:0000314"/>
    <property type="project" value="UniProtKB"/>
</dbReference>
<dbReference type="GO" id="GO:0044284">
    <property type="term" value="C:mitochondrial crista junction"/>
    <property type="evidence" value="ECO:0007669"/>
    <property type="project" value="Ensembl"/>
</dbReference>
<dbReference type="GO" id="GO:0005743">
    <property type="term" value="C:mitochondrial inner membrane"/>
    <property type="evidence" value="ECO:0000314"/>
    <property type="project" value="UniProtKB"/>
</dbReference>
<dbReference type="GO" id="GO:0005758">
    <property type="term" value="C:mitochondrial intermembrane space"/>
    <property type="evidence" value="ECO:0000314"/>
    <property type="project" value="UniProtKB"/>
</dbReference>
<dbReference type="GO" id="GO:0031966">
    <property type="term" value="C:mitochondrial membrane"/>
    <property type="evidence" value="ECO:0000250"/>
    <property type="project" value="UniProtKB"/>
</dbReference>
<dbReference type="GO" id="GO:0005739">
    <property type="term" value="C:mitochondrion"/>
    <property type="evidence" value="ECO:0007005"/>
    <property type="project" value="MGI"/>
</dbReference>
<dbReference type="GO" id="GO:1990246">
    <property type="term" value="C:uniplex complex"/>
    <property type="evidence" value="ECO:0000250"/>
    <property type="project" value="UniProtKB"/>
</dbReference>
<dbReference type="GO" id="GO:0019855">
    <property type="term" value="F:calcium channel inhibitor activity"/>
    <property type="evidence" value="ECO:0007669"/>
    <property type="project" value="Ensembl"/>
</dbReference>
<dbReference type="GO" id="GO:0005509">
    <property type="term" value="F:calcium ion binding"/>
    <property type="evidence" value="ECO:0000315"/>
    <property type="project" value="UniProtKB"/>
</dbReference>
<dbReference type="GO" id="GO:0061891">
    <property type="term" value="F:calcium ion sensor activity"/>
    <property type="evidence" value="ECO:0000314"/>
    <property type="project" value="UniProtKB"/>
</dbReference>
<dbReference type="GO" id="GO:0042802">
    <property type="term" value="F:identical protein binding"/>
    <property type="evidence" value="ECO:0007669"/>
    <property type="project" value="Ensembl"/>
</dbReference>
<dbReference type="GO" id="GO:0046982">
    <property type="term" value="F:protein heterodimerization activity"/>
    <property type="evidence" value="ECO:0000353"/>
    <property type="project" value="UniProtKB"/>
</dbReference>
<dbReference type="GO" id="GO:0036444">
    <property type="term" value="P:calcium import into the mitochondrion"/>
    <property type="evidence" value="ECO:0000314"/>
    <property type="project" value="UniProtKB"/>
</dbReference>
<dbReference type="GO" id="GO:0070509">
    <property type="term" value="P:calcium ion import"/>
    <property type="evidence" value="ECO:0000250"/>
    <property type="project" value="UniProtKB"/>
</dbReference>
<dbReference type="GO" id="GO:0071277">
    <property type="term" value="P:cellular response to calcium ion"/>
    <property type="evidence" value="ECO:0007669"/>
    <property type="project" value="Ensembl"/>
</dbReference>
<dbReference type="GO" id="GO:0072732">
    <property type="term" value="P:cellular response to calcium ion starvation"/>
    <property type="evidence" value="ECO:0007669"/>
    <property type="project" value="Ensembl"/>
</dbReference>
<dbReference type="GO" id="GO:0051560">
    <property type="term" value="P:mitochondrial calcium ion homeostasis"/>
    <property type="evidence" value="ECO:0000250"/>
    <property type="project" value="UniProtKB"/>
</dbReference>
<dbReference type="GO" id="GO:0006851">
    <property type="term" value="P:mitochondrial calcium ion transmembrane transport"/>
    <property type="evidence" value="ECO:0000250"/>
    <property type="project" value="UniProtKB"/>
</dbReference>
<dbReference type="GO" id="GO:1903852">
    <property type="term" value="P:positive regulation of cristae formation"/>
    <property type="evidence" value="ECO:0000314"/>
    <property type="project" value="UniProtKB"/>
</dbReference>
<dbReference type="GO" id="GO:0051561">
    <property type="term" value="P:positive regulation of mitochondrial calcium ion concentration"/>
    <property type="evidence" value="ECO:0000250"/>
    <property type="project" value="UniProtKB"/>
</dbReference>
<dbReference type="GO" id="GO:0051260">
    <property type="term" value="P:protein homooligomerization"/>
    <property type="evidence" value="ECO:0007669"/>
    <property type="project" value="Ensembl"/>
</dbReference>
<dbReference type="GO" id="GO:1900069">
    <property type="term" value="P:regulation of cellular hyperosmotic salinity response"/>
    <property type="evidence" value="ECO:0000250"/>
    <property type="project" value="UniProtKB"/>
</dbReference>
<dbReference type="CDD" id="cd16173">
    <property type="entry name" value="EFh_MICU1"/>
    <property type="match status" value="1"/>
</dbReference>
<dbReference type="FunFam" id="1.10.238.10:FF:000088">
    <property type="entry name" value="Calcium uptake protein 1, mitochondrial"/>
    <property type="match status" value="1"/>
</dbReference>
<dbReference type="FunFam" id="1.10.238.10:FF:000159">
    <property type="entry name" value="Calcium uptake protein 1, mitochondrial"/>
    <property type="match status" value="1"/>
</dbReference>
<dbReference type="Gene3D" id="1.10.238.10">
    <property type="entry name" value="EF-hand"/>
    <property type="match status" value="2"/>
</dbReference>
<dbReference type="InterPro" id="IPR011992">
    <property type="entry name" value="EF-hand-dom_pair"/>
</dbReference>
<dbReference type="InterPro" id="IPR018247">
    <property type="entry name" value="EF_Hand_1_Ca_BS"/>
</dbReference>
<dbReference type="InterPro" id="IPR002048">
    <property type="entry name" value="EF_hand_dom"/>
</dbReference>
<dbReference type="InterPro" id="IPR039800">
    <property type="entry name" value="MICU1/2/3"/>
</dbReference>
<dbReference type="PANTHER" id="PTHR12294:SF1">
    <property type="entry name" value="CALCIUM UPTAKE PROTEIN 1, MITOCHONDRIAL"/>
    <property type="match status" value="1"/>
</dbReference>
<dbReference type="PANTHER" id="PTHR12294">
    <property type="entry name" value="EF HAND DOMAIN FAMILY A1,A2-RELATED"/>
    <property type="match status" value="1"/>
</dbReference>
<dbReference type="Pfam" id="PF13202">
    <property type="entry name" value="EF-hand_5"/>
    <property type="match status" value="1"/>
</dbReference>
<dbReference type="Pfam" id="PF13833">
    <property type="entry name" value="EF-hand_8"/>
    <property type="match status" value="1"/>
</dbReference>
<dbReference type="SMART" id="SM00054">
    <property type="entry name" value="EFh"/>
    <property type="match status" value="2"/>
</dbReference>
<dbReference type="SUPFAM" id="SSF47473">
    <property type="entry name" value="EF-hand"/>
    <property type="match status" value="2"/>
</dbReference>
<dbReference type="PROSITE" id="PS00018">
    <property type="entry name" value="EF_HAND_1"/>
    <property type="match status" value="2"/>
</dbReference>
<dbReference type="PROSITE" id="PS50222">
    <property type="entry name" value="EF_HAND_2"/>
    <property type="match status" value="3"/>
</dbReference>
<feature type="transit peptide" description="Mitochondrion" evidence="2">
    <location>
        <begin position="1"/>
        <end position="33"/>
    </location>
</feature>
<feature type="chain" id="PRO_0000322992" description="Calcium uptake protein 1, mitochondrial">
    <location>
        <begin position="34"/>
        <end position="477"/>
    </location>
</feature>
<feature type="domain" description="EF-hand 1" evidence="3">
    <location>
        <begin position="220"/>
        <end position="255"/>
    </location>
</feature>
<feature type="domain" description="EF-hand 2; degenerate" evidence="3">
    <location>
        <begin position="356"/>
        <end position="376"/>
    </location>
</feature>
<feature type="domain" description="EF-hand 3" evidence="3">
    <location>
        <begin position="410"/>
        <end position="445"/>
    </location>
</feature>
<feature type="region of interest" description="Disordered" evidence="4">
    <location>
        <begin position="57"/>
        <end position="107"/>
    </location>
</feature>
<feature type="region of interest" description="Polybasic region" evidence="1">
    <location>
        <begin position="101"/>
        <end position="112"/>
    </location>
</feature>
<feature type="region of interest" description="K/R-ring" evidence="1">
    <location>
        <begin position="128"/>
        <end position="131"/>
    </location>
</feature>
<feature type="region of interest" description="K/R-ring" evidence="1">
    <location>
        <begin position="261"/>
        <end position="265"/>
    </location>
</feature>
<feature type="region of interest" description="C-helix region" evidence="1">
    <location>
        <begin position="457"/>
        <end position="467"/>
    </location>
</feature>
<feature type="compositionally biased region" description="Basic and acidic residues" evidence="4">
    <location>
        <begin position="66"/>
        <end position="89"/>
    </location>
</feature>
<feature type="binding site" evidence="3 7">
    <location>
        <position position="233"/>
    </location>
    <ligand>
        <name>Ca(2+)</name>
        <dbReference type="ChEBI" id="CHEBI:29108"/>
        <label>1</label>
    </ligand>
</feature>
<feature type="binding site" evidence="3 7">
    <location>
        <position position="235"/>
    </location>
    <ligand>
        <name>Ca(2+)</name>
        <dbReference type="ChEBI" id="CHEBI:29108"/>
        <label>1</label>
    </ligand>
</feature>
<feature type="binding site" evidence="3 7">
    <location>
        <position position="237"/>
    </location>
    <ligand>
        <name>Ca(2+)</name>
        <dbReference type="ChEBI" id="CHEBI:29108"/>
        <label>1</label>
    </ligand>
</feature>
<feature type="binding site" evidence="3 7">
    <location>
        <position position="239"/>
    </location>
    <ligand>
        <name>Ca(2+)</name>
        <dbReference type="ChEBI" id="CHEBI:29108"/>
        <label>1</label>
    </ligand>
</feature>
<feature type="binding site" evidence="3 7">
    <location>
        <position position="244"/>
    </location>
    <ligand>
        <name>Ca(2+)</name>
        <dbReference type="ChEBI" id="CHEBI:29108"/>
        <label>1</label>
    </ligand>
</feature>
<feature type="binding site" evidence="3 7">
    <location>
        <position position="423"/>
    </location>
    <ligand>
        <name>Ca(2+)</name>
        <dbReference type="ChEBI" id="CHEBI:29108"/>
        <label>2</label>
    </ligand>
</feature>
<feature type="binding site" evidence="3 7">
    <location>
        <position position="425"/>
    </location>
    <ligand>
        <name>Ca(2+)</name>
        <dbReference type="ChEBI" id="CHEBI:29108"/>
        <label>2</label>
    </ligand>
</feature>
<feature type="binding site" evidence="3 7">
    <location>
        <position position="427"/>
    </location>
    <ligand>
        <name>Ca(2+)</name>
        <dbReference type="ChEBI" id="CHEBI:29108"/>
        <label>2</label>
    </ligand>
</feature>
<feature type="binding site" evidence="3 7">
    <location>
        <position position="429"/>
    </location>
    <ligand>
        <name>Ca(2+)</name>
        <dbReference type="ChEBI" id="CHEBI:29108"/>
        <label>2</label>
    </ligand>
</feature>
<feature type="binding site" evidence="3 7">
    <location>
        <position position="434"/>
    </location>
    <ligand>
        <name>Ca(2+)</name>
        <dbReference type="ChEBI" id="CHEBI:29108"/>
        <label>2</label>
    </ligand>
</feature>
<feature type="modified residue" description="Phosphoserine; by PKB" evidence="11">
    <location>
        <position position="124"/>
    </location>
</feature>
<feature type="modified residue" description="Asymmetric dimethylarginine" evidence="1">
    <location>
        <position position="457"/>
    </location>
</feature>
<feature type="disulfide bond" description="Interchain (with C-410 in MICU2)" evidence="7">
    <location>
        <position position="465"/>
    </location>
</feature>
<feature type="splice variant" id="VSP_031982" description="In isoform 2." evidence="16">
    <original>K</original>
    <variation>KEFWQTE</variation>
    <location>
        <position position="181"/>
    </location>
</feature>
<feature type="splice variant" id="VSP_031983" description="In isoform 3." evidence="15">
    <original>K</original>
    <variation>KEFWQ</variation>
    <location>
        <position position="181"/>
    </location>
</feature>
<feature type="mutagenesis site" description="No effect." evidence="7">
    <original>C</original>
    <variation>A</variation>
    <location>
        <position position="62"/>
    </location>
</feature>
<feature type="mutagenesis site" description="Abolishes interaction with EMRE/SMDT1 without affecting ability to regulate cristae organization." evidence="13">
    <original>KKKKR</original>
    <variation>QQQQQ</variation>
    <location>
        <begin position="101"/>
        <end position="105"/>
    </location>
</feature>
<feature type="mutagenesis site" description="Abolished phosphorylation by AKT1; leading to increased stability." evidence="11">
    <original>S</original>
    <variation>A</variation>
    <location>
        <position position="124"/>
    </location>
</feature>
<feature type="mutagenesis site" description="Mimics phosphorylation; leading to decreased stability." evidence="11">
    <original>S</original>
    <variation>D</variation>
    <location>
        <position position="124"/>
    </location>
</feature>
<feature type="mutagenesis site" description="No effect." evidence="7">
    <original>C</original>
    <variation>A</variation>
    <location>
        <position position="203"/>
    </location>
</feature>
<feature type="mutagenesis site" description="Acts as a dominant negative mutant that reduces the mitochondrial Ca(2+) peaks; when associated with A-244; A-423 and A-434. Does not affect ability to regulate cristae organization; when associated with A-244; A-423 and A-434." evidence="7 13">
    <original>D</original>
    <variation>A</variation>
    <location>
        <position position="233"/>
    </location>
</feature>
<feature type="mutagenesis site" description="Acts as a dominant negative mutant that reduces the mitochondrial Ca(2+) peaks; when associated with A-233; A-423 and A-434. Does not affect ability to regulate cristae organization; when associated with A-233; A-423 and A-434." evidence="7">
    <original>E</original>
    <variation>A</variation>
    <location>
        <position position="244"/>
    </location>
</feature>
<feature type="mutagenesis site" description="No effect." evidence="7">
    <original>C</original>
    <variation>A</variation>
    <location>
        <position position="277"/>
    </location>
</feature>
<feature type="mutagenesis site" description="Acts as a dominant negative mutant that reduces the mitochondrial Ca(2+) peaks; when associated with A-233; A-244 and A-434. Does not affect ability to regulate cristae organization; when associated with A-233; A-244 and A-434." evidence="7">
    <original>D</original>
    <variation>A</variation>
    <location>
        <position position="423"/>
    </location>
</feature>
<feature type="mutagenesis site" description="Acts as a dominant negative mutant that reduces the mitochondrial Ca(2+) peaks; when associated with A-233; A-244 and A-423. Does not affect ability to regulate cristae organization; A-233; A-244 and A-423." evidence="7">
    <original>E</original>
    <variation>A</variation>
    <location>
        <position position="434"/>
    </location>
</feature>
<feature type="mutagenesis site" description="Decreased interaction with MCU without affecting ability to regulate cristae organization." evidence="13">
    <original>KQRLMR</original>
    <variation>AQALMA</variation>
    <location>
        <begin position="440"/>
        <end position="445"/>
    </location>
</feature>
<feature type="mutagenesis site" description="Abolishes interaction with MICU2.">
    <original>C</original>
    <variation>A</variation>
    <location>
        <position position="465"/>
    </location>
</feature>
<feature type="sequence conflict" description="In Ref. 1; BAC36895." evidence="19" ref="1">
    <original>W</original>
    <variation>C</variation>
    <location>
        <position position="19"/>
    </location>
</feature>
<feature type="mutagenesis site" description="Abolished calcium-binding, leading to a dominant-negative mutant that reduces mitochondrial calcium uptake; when associated with K-248, A-427 and K-438.">
    <original>D</original>
    <variation>A</variation>
    <location sequence="Q8VCX5-3">
        <position position="237"/>
    </location>
</feature>
<feature type="mutagenesis site" description="Abolished calcium-binding, leading to a dominant-negative mutant that reduces mitochondrial calcium uptake; when associated with A-237, A-248 and K-438.">
    <original>E</original>
    <variation>K</variation>
    <location sequence="Q8VCX5-3">
        <position position="248"/>
    </location>
</feature>
<feature type="mutagenesis site" description="Abolished calcium-binding, leading to a dominant-negative mutant that reduces mitochondrial calcium uptake; when associated with A-237, K-248 and K-438.">
    <original>D</original>
    <variation>A</variation>
    <location sequence="Q8VCX5-3">
        <position position="427"/>
    </location>
</feature>
<feature type="mutagenesis site" description="Abolished calcium-binding, leading to a dominant-negative mutant that reduces mitochondrial calcium uptake; when associated with A-237, K-248 and A-427.">
    <original>E</original>
    <variation>K</variation>
    <location sequence="Q8VCX5-3">
        <position position="438"/>
    </location>
</feature>
<accession>Q8VCX5</accession>
<accession>Q8BK07</accession>
<accession>Q8BL84</accession>
<accession>Q8R1W0</accession>
<protein>
    <recommendedName>
        <fullName evidence="19">Calcium uptake protein 1, mitochondrial</fullName>
    </recommendedName>
    <alternativeName>
        <fullName evidence="17">Calcium-binding atopy-related autoantigen 1 homolog</fullName>
    </alternativeName>
</protein>
<reference key="1">
    <citation type="journal article" date="2005" name="Science">
        <title>The transcriptional landscape of the mammalian genome.</title>
        <authorList>
            <person name="Carninci P."/>
            <person name="Kasukawa T."/>
            <person name="Katayama S."/>
            <person name="Gough J."/>
            <person name="Frith M.C."/>
            <person name="Maeda N."/>
            <person name="Oyama R."/>
            <person name="Ravasi T."/>
            <person name="Lenhard B."/>
            <person name="Wells C."/>
            <person name="Kodzius R."/>
            <person name="Shimokawa K."/>
            <person name="Bajic V.B."/>
            <person name="Brenner S.E."/>
            <person name="Batalov S."/>
            <person name="Forrest A.R."/>
            <person name="Zavolan M."/>
            <person name="Davis M.J."/>
            <person name="Wilming L.G."/>
            <person name="Aidinis V."/>
            <person name="Allen J.E."/>
            <person name="Ambesi-Impiombato A."/>
            <person name="Apweiler R."/>
            <person name="Aturaliya R.N."/>
            <person name="Bailey T.L."/>
            <person name="Bansal M."/>
            <person name="Baxter L."/>
            <person name="Beisel K.W."/>
            <person name="Bersano T."/>
            <person name="Bono H."/>
            <person name="Chalk A.M."/>
            <person name="Chiu K.P."/>
            <person name="Choudhary V."/>
            <person name="Christoffels A."/>
            <person name="Clutterbuck D.R."/>
            <person name="Crowe M.L."/>
            <person name="Dalla E."/>
            <person name="Dalrymple B.P."/>
            <person name="de Bono B."/>
            <person name="Della Gatta G."/>
            <person name="di Bernardo D."/>
            <person name="Down T."/>
            <person name="Engstrom P."/>
            <person name="Fagiolini M."/>
            <person name="Faulkner G."/>
            <person name="Fletcher C.F."/>
            <person name="Fukushima T."/>
            <person name="Furuno M."/>
            <person name="Futaki S."/>
            <person name="Gariboldi M."/>
            <person name="Georgii-Hemming P."/>
            <person name="Gingeras T.R."/>
            <person name="Gojobori T."/>
            <person name="Green R.E."/>
            <person name="Gustincich S."/>
            <person name="Harbers M."/>
            <person name="Hayashi Y."/>
            <person name="Hensch T.K."/>
            <person name="Hirokawa N."/>
            <person name="Hill D."/>
            <person name="Huminiecki L."/>
            <person name="Iacono M."/>
            <person name="Ikeo K."/>
            <person name="Iwama A."/>
            <person name="Ishikawa T."/>
            <person name="Jakt M."/>
            <person name="Kanapin A."/>
            <person name="Katoh M."/>
            <person name="Kawasawa Y."/>
            <person name="Kelso J."/>
            <person name="Kitamura H."/>
            <person name="Kitano H."/>
            <person name="Kollias G."/>
            <person name="Krishnan S.P."/>
            <person name="Kruger A."/>
            <person name="Kummerfeld S.K."/>
            <person name="Kurochkin I.V."/>
            <person name="Lareau L.F."/>
            <person name="Lazarevic D."/>
            <person name="Lipovich L."/>
            <person name="Liu J."/>
            <person name="Liuni S."/>
            <person name="McWilliam S."/>
            <person name="Madan Babu M."/>
            <person name="Madera M."/>
            <person name="Marchionni L."/>
            <person name="Matsuda H."/>
            <person name="Matsuzawa S."/>
            <person name="Miki H."/>
            <person name="Mignone F."/>
            <person name="Miyake S."/>
            <person name="Morris K."/>
            <person name="Mottagui-Tabar S."/>
            <person name="Mulder N."/>
            <person name="Nakano N."/>
            <person name="Nakauchi H."/>
            <person name="Ng P."/>
            <person name="Nilsson R."/>
            <person name="Nishiguchi S."/>
            <person name="Nishikawa S."/>
            <person name="Nori F."/>
            <person name="Ohara O."/>
            <person name="Okazaki Y."/>
            <person name="Orlando V."/>
            <person name="Pang K.C."/>
            <person name="Pavan W.J."/>
            <person name="Pavesi G."/>
            <person name="Pesole G."/>
            <person name="Petrovsky N."/>
            <person name="Piazza S."/>
            <person name="Reed J."/>
            <person name="Reid J.F."/>
            <person name="Ring B.Z."/>
            <person name="Ringwald M."/>
            <person name="Rost B."/>
            <person name="Ruan Y."/>
            <person name="Salzberg S.L."/>
            <person name="Sandelin A."/>
            <person name="Schneider C."/>
            <person name="Schoenbach C."/>
            <person name="Sekiguchi K."/>
            <person name="Semple C.A."/>
            <person name="Seno S."/>
            <person name="Sessa L."/>
            <person name="Sheng Y."/>
            <person name="Shibata Y."/>
            <person name="Shimada H."/>
            <person name="Shimada K."/>
            <person name="Silva D."/>
            <person name="Sinclair B."/>
            <person name="Sperling S."/>
            <person name="Stupka E."/>
            <person name="Sugiura K."/>
            <person name="Sultana R."/>
            <person name="Takenaka Y."/>
            <person name="Taki K."/>
            <person name="Tammoja K."/>
            <person name="Tan S.L."/>
            <person name="Tang S."/>
            <person name="Taylor M.S."/>
            <person name="Tegner J."/>
            <person name="Teichmann S.A."/>
            <person name="Ueda H.R."/>
            <person name="van Nimwegen E."/>
            <person name="Verardo R."/>
            <person name="Wei C.L."/>
            <person name="Yagi K."/>
            <person name="Yamanishi H."/>
            <person name="Zabarovsky E."/>
            <person name="Zhu S."/>
            <person name="Zimmer A."/>
            <person name="Hide W."/>
            <person name="Bult C."/>
            <person name="Grimmond S.M."/>
            <person name="Teasdale R.D."/>
            <person name="Liu E.T."/>
            <person name="Brusic V."/>
            <person name="Quackenbush J."/>
            <person name="Wahlestedt C."/>
            <person name="Mattick J.S."/>
            <person name="Hume D.A."/>
            <person name="Kai C."/>
            <person name="Sasaki D."/>
            <person name="Tomaru Y."/>
            <person name="Fukuda S."/>
            <person name="Kanamori-Katayama M."/>
            <person name="Suzuki M."/>
            <person name="Aoki J."/>
            <person name="Arakawa T."/>
            <person name="Iida J."/>
            <person name="Imamura K."/>
            <person name="Itoh M."/>
            <person name="Kato T."/>
            <person name="Kawaji H."/>
            <person name="Kawagashira N."/>
            <person name="Kawashima T."/>
            <person name="Kojima M."/>
            <person name="Kondo S."/>
            <person name="Konno H."/>
            <person name="Nakano K."/>
            <person name="Ninomiya N."/>
            <person name="Nishio T."/>
            <person name="Okada M."/>
            <person name="Plessy C."/>
            <person name="Shibata K."/>
            <person name="Shiraki T."/>
            <person name="Suzuki S."/>
            <person name="Tagami M."/>
            <person name="Waki K."/>
            <person name="Watahiki A."/>
            <person name="Okamura-Oho Y."/>
            <person name="Suzuki H."/>
            <person name="Kawai J."/>
            <person name="Hayashizaki Y."/>
        </authorList>
    </citation>
    <scope>NUCLEOTIDE SEQUENCE [LARGE SCALE MRNA] (ISOFORMS 1 AND 2)</scope>
    <source>
        <strain>C57BL/6J</strain>
        <tissue>Corpora quadrigemina</tissue>
        <tissue>Embryo</tissue>
        <tissue>Liver</tissue>
        <tissue>Lung</tissue>
    </source>
</reference>
<reference key="2">
    <citation type="journal article" date="2004" name="Genome Res.">
        <title>The status, quality, and expansion of the NIH full-length cDNA project: the Mammalian Gene Collection (MGC).</title>
        <authorList>
            <consortium name="The MGC Project Team"/>
        </authorList>
    </citation>
    <scope>NUCLEOTIDE SEQUENCE [LARGE SCALE MRNA] (ISOFORMS 1 AND 3)</scope>
    <source>
        <strain>FVB/N</strain>
        <tissue>Eye</tissue>
        <tissue>Mammary tumor</tissue>
        <tissue>Salivary gland</tissue>
    </source>
</reference>
<reference key="3">
    <citation type="journal article" date="2010" name="Cell">
        <title>A tissue-specific atlas of mouse protein phosphorylation and expression.</title>
        <authorList>
            <person name="Huttlin E.L."/>
            <person name="Jedrychowski M.P."/>
            <person name="Elias J.E."/>
            <person name="Goswami T."/>
            <person name="Rad R."/>
            <person name="Beausoleil S.A."/>
            <person name="Villen J."/>
            <person name="Haas W."/>
            <person name="Sowa M.E."/>
            <person name="Gygi S.P."/>
        </authorList>
    </citation>
    <scope>IDENTIFICATION BY MASS SPECTROMETRY [LARGE SCALE ANALYSIS]</scope>
    <source>
        <tissue>Brown adipose tissue</tissue>
        <tissue>Kidney</tissue>
        <tissue>Spleen</tissue>
        <tissue>Testis</tissue>
    </source>
</reference>
<reference key="4">
    <citation type="journal article" date="2011" name="Nature">
        <title>A forty-kilodalton protein of the inner membrane is the mitochondrial calcium uniporter.</title>
        <authorList>
            <person name="De Stefani D."/>
            <person name="Raffaello A."/>
            <person name="Teardo E."/>
            <person name="Szabo I."/>
            <person name="Rizzuto R."/>
        </authorList>
    </citation>
    <scope>TISSUE SPECIFICITY</scope>
</reference>
<reference key="5">
    <citation type="journal article" date="2013" name="PLoS ONE">
        <title>MICU2, a paralog of MICU1, resides within the mitochondrial uniporter complex to regulate calcium handling.</title>
        <authorList>
            <person name="Plovanich M."/>
            <person name="Bogorad R.L."/>
            <person name="Sancak Y."/>
            <person name="Kamer K.J."/>
            <person name="Strittmatter L."/>
            <person name="Li A.A."/>
            <person name="Girgis H.S."/>
            <person name="Kuchimanchi S."/>
            <person name="De Groot J."/>
            <person name="Speciner L."/>
            <person name="Taneja N."/>
            <person name="Oshea J."/>
            <person name="Koteliansky V."/>
            <person name="Mootha V.K."/>
        </authorList>
    </citation>
    <scope>IDENTIFICATION IN A COMPLEX WITH MCU AND MICU2</scope>
    <scope>TISSUE SPECIFICITY</scope>
</reference>
<reference key="6">
    <citation type="journal article" date="2014" name="Mol. Cell">
        <title>MICU1 and MICU2 finely tune the mitochondrial Ca(2+) uniporter by exerting opposite effects on MCU activity.</title>
        <authorList>
            <person name="Patron M."/>
            <person name="Checchetto V."/>
            <person name="Raffaello A."/>
            <person name="Teardo E."/>
            <person name="Vecellio Reane D."/>
            <person name="Mantoan M."/>
            <person name="Granatiero V."/>
            <person name="Szabo I."/>
            <person name="De Stefani D."/>
            <person name="Rizzuto R."/>
        </authorList>
    </citation>
    <scope>FUNCTION</scope>
    <scope>INTERACTION WITH MICU2</scope>
    <scope>DISULFIDE BOND</scope>
    <scope>CALCIUM-BINDING MUTAGENESIS OF CYS-62; CYS-203; ASP-233; GLU-244; CYS-277; ASP-423; GLU-434 AND CYS-465</scope>
</reference>
<reference key="7">
    <citation type="journal article" date="2016" name="Cell Rep.">
        <title>MICU1 serves as a molecular gatekeeper to prevent in vivo mitochondrial calcium overload.</title>
        <authorList>
            <person name="Liu J.C."/>
            <person name="Liu J."/>
            <person name="Holmstroem K.M."/>
            <person name="Menazza S."/>
            <person name="Parks R.J."/>
            <person name="Fergusson M.M."/>
            <person name="Yu Z.X."/>
            <person name="Springer D.A."/>
            <person name="Halsey C."/>
            <person name="Liu C."/>
            <person name="Murphy E."/>
            <person name="Finkel T."/>
        </authorList>
    </citation>
    <scope>FUNCTION</scope>
    <scope>DISRUPTION PHENOTYPE</scope>
</reference>
<reference key="8">
    <citation type="journal article" date="2016" name="Mol. Cell">
        <title>A MICU1 splice variant confers high sensitivity to the mitochondrial Ca2+ uptake machinery of skeletal muscle.</title>
        <authorList>
            <person name="Vecellio Reane D."/>
            <person name="Vallese F."/>
            <person name="Checchetto V."/>
            <person name="Acquasaliente L."/>
            <person name="Butera G."/>
            <person name="De Filippis V."/>
            <person name="Szabo I."/>
            <person name="Zanotti G."/>
            <person name="Rizzuto R."/>
            <person name="Raffaello A."/>
        </authorList>
    </citation>
    <scope>FUNCTION (ISOFORM 3)</scope>
    <scope>SUBCELLULAR LOCATION (ISOFORM 3)</scope>
    <scope>TISSUE SPECIFICITY (ISOFORM 3)</scope>
    <scope>SUBUNIT (ISOFORM 3)</scope>
    <scope>MUTAGENESIS OF ASP-237; GLU-248; ASP-427 AND GLU-438 (ISOFORM 3)</scope>
</reference>
<reference key="9">
    <citation type="journal article" date="2016" name="Nat. Commun.">
        <title>MICU1 regulation of mitochondrial Ca(2+) uptake dictates survival and tissue regeneration.</title>
        <authorList>
            <person name="Antony A.N."/>
            <person name="Paillard M."/>
            <person name="Moffat C."/>
            <person name="Juskeviciute E."/>
            <person name="Correnti J."/>
            <person name="Bolon B."/>
            <person name="Rubin E."/>
            <person name="Csordas G."/>
            <person name="Seifert E.L."/>
            <person name="Hoek J.B."/>
            <person name="Hajnoczky G."/>
        </authorList>
    </citation>
    <scope>DISRUPTION PHENOTYPE</scope>
</reference>
<reference key="10">
    <citation type="journal article" date="2019" name="EMBO J.">
        <title>Akt-mediated phosphorylation of MICU1 regulates mitochondrial Ca2+ levels and tumor growth.</title>
        <authorList>
            <person name="Marchi S."/>
            <person name="Corricelli M."/>
            <person name="Branchini A."/>
            <person name="Vitto V.A.M."/>
            <person name="Missiroli S."/>
            <person name="Morciano G."/>
            <person name="Perrone M."/>
            <person name="Ferrarese M."/>
            <person name="Giorgi C."/>
            <person name="Pinotti M."/>
            <person name="Galluzzi L."/>
            <person name="Kroemer G."/>
            <person name="Pinton P."/>
        </authorList>
    </citation>
    <scope>SUBCELLULAR LOCATION</scope>
    <scope>PHOSPHORYLATION AT SER-124</scope>
    <scope>MUTAGENESIS OF SER-124</scope>
</reference>
<reference key="11">
    <citation type="journal article" date="2022" name="Mol. Cell">
        <title>Mechanisms and significance of tissue-specific MICU regulation of the mitochondrial calcium uniporter complex.</title>
        <authorList>
            <person name="Tsai C.W."/>
            <person name="Rodriguez M.X."/>
            <person name="Van Keuren A.M."/>
            <person name="Phillips C.B."/>
            <person name="Shushunov H.M."/>
            <person name="Lee J.E."/>
            <person name="Garcia A.M."/>
            <person name="Ambardekar A.V."/>
            <person name="Cleveland J.C. Jr."/>
            <person name="Reisz J.A."/>
            <person name="Proenza C."/>
            <person name="Chatfield K.C."/>
            <person name="Tsai M.F."/>
        </authorList>
    </citation>
    <scope>FUNCTION</scope>
    <scope>SUBUNIT</scope>
</reference>
<reference key="12">
    <citation type="journal article" date="2023" name="Sci. Signal.">
        <title>MICU1 regulates mitochondrial cristae structure and function independently of the mitochondrial Ca2+ uniporter channel.</title>
        <authorList>
            <person name="Tomar D."/>
            <person name="Thomas M."/>
            <person name="Garbincius J.F."/>
            <person name="Kolmetzky D.W."/>
            <person name="Salik O."/>
            <person name="Jadiya P."/>
            <person name="Joseph S.K."/>
            <person name="Carpenter A.C."/>
            <person name="Hajnoczky G."/>
            <person name="Elrod J.W."/>
        </authorList>
    </citation>
    <scope>FUNCTION</scope>
    <scope>INTERACTION WITH THE MICOS COMPLEX</scope>
    <scope>MUTAGENESIS OF 101-LYS--ARG-105; ASP-233; GLU-244; ASP-423; GLU-434 AND 440-LYS--ARG-445</scope>
</reference>
<reference key="13">
    <citation type="journal article" date="2024" name="J. Physiol. (Lond.)">
        <title>Loss of mitochondrial Ca2+ uptake protein 3 impairs skeletal muscle calcium handling and exercise capacity.</title>
        <authorList>
            <person name="Roman B."/>
            <person name="Mastoor Y."/>
            <person name="Zhang Y."/>
            <person name="Gross D."/>
            <person name="Springer D."/>
            <person name="Liu C."/>
            <person name="Glancy B."/>
            <person name="Murphy E."/>
        </authorList>
    </citation>
    <scope>INTERACTION WITH MICU3</scope>
</reference>
<organism>
    <name type="scientific">Mus musculus</name>
    <name type="common">Mouse</name>
    <dbReference type="NCBI Taxonomy" id="10090"/>
    <lineage>
        <taxon>Eukaryota</taxon>
        <taxon>Metazoa</taxon>
        <taxon>Chordata</taxon>
        <taxon>Craniata</taxon>
        <taxon>Vertebrata</taxon>
        <taxon>Euteleostomi</taxon>
        <taxon>Mammalia</taxon>
        <taxon>Eutheria</taxon>
        <taxon>Euarchontoglires</taxon>
        <taxon>Glires</taxon>
        <taxon>Rodentia</taxon>
        <taxon>Myomorpha</taxon>
        <taxon>Muroidea</taxon>
        <taxon>Muridae</taxon>
        <taxon>Murinae</taxon>
        <taxon>Mus</taxon>
        <taxon>Mus</taxon>
    </lineage>
</organism>
<name>MICU1_MOUSE</name>
<evidence type="ECO:0000250" key="1">
    <source>
        <dbReference type="UniProtKB" id="Q9BPX6"/>
    </source>
</evidence>
<evidence type="ECO:0000255" key="2"/>
<evidence type="ECO:0000255" key="3">
    <source>
        <dbReference type="PROSITE-ProRule" id="PRU00448"/>
    </source>
</evidence>
<evidence type="ECO:0000256" key="4">
    <source>
        <dbReference type="SAM" id="MobiDB-lite"/>
    </source>
</evidence>
<evidence type="ECO:0000269" key="5">
    <source>
    </source>
</evidence>
<evidence type="ECO:0000269" key="6">
    <source>
    </source>
</evidence>
<evidence type="ECO:0000269" key="7">
    <source>
    </source>
</evidence>
<evidence type="ECO:0000269" key="8">
    <source>
    </source>
</evidence>
<evidence type="ECO:0000269" key="9">
    <source>
    </source>
</evidence>
<evidence type="ECO:0000269" key="10">
    <source>
    </source>
</evidence>
<evidence type="ECO:0000269" key="11">
    <source>
    </source>
</evidence>
<evidence type="ECO:0000269" key="12">
    <source>
    </source>
</evidence>
<evidence type="ECO:0000269" key="13">
    <source>
    </source>
</evidence>
<evidence type="ECO:0000269" key="14">
    <source>
    </source>
</evidence>
<evidence type="ECO:0000303" key="15">
    <source>
    </source>
</evidence>
<evidence type="ECO:0000303" key="16">
    <source>
    </source>
</evidence>
<evidence type="ECO:0000303" key="17">
    <source>
    </source>
</evidence>
<evidence type="ECO:0000303" key="18">
    <source>
    </source>
</evidence>
<evidence type="ECO:0000305" key="19"/>
<evidence type="ECO:0000305" key="20">
    <source>
    </source>
</evidence>
<evidence type="ECO:0000312" key="21">
    <source>
        <dbReference type="MGI" id="MGI:2384909"/>
    </source>
</evidence>
<sequence length="477" mass="54353">MFRLNTLSALAELAVGSRWYHGASQPTQTKRRLMLVAFLGASAVTASTGLLWKKAHAESPPCVNSKKPDTEDKERNKDSGEVSSREGRAADAAAEPYPEDKKKKRSGFRDRKVMEYENRIRAYSTPDKIFRYFATLKVINEPGETEVFMTPQDFVRSITPNEKQPEHLGLDQYIIKRFDGKKIAQEREKFADEGSIFYSLGECGLISFSDYIFLTTVLSTPQRNFEIAFKMFDLNGDGEVDMEEFEQVQSIIRSQTSMGMRHRDRPTTGNTLKSGLCSALTTYFFGADLKGKLTIKNFLEFQRKLQHDVLKLEFERHDPVDGRISERQFGGMLLAYSGVQSKKLTAMQRQLKKHFKDGKGLTFQEVENFFTFLKNINDVDTALSFYHMAGASLDKVTMQQVARTVAKVELSDHVCDVVFALFDCDGNGELSNKEFVSIMKQRLMRGLEKPKDMGFTRLMQAMWKCAQETAWDFALPK</sequence>
<proteinExistence type="evidence at protein level"/>
<keyword id="KW-0025">Alternative splicing</keyword>
<keyword id="KW-0106">Calcium</keyword>
<keyword id="KW-0109">Calcium transport</keyword>
<keyword id="KW-1015">Disulfide bond</keyword>
<keyword id="KW-0406">Ion transport</keyword>
<keyword id="KW-0472">Membrane</keyword>
<keyword id="KW-0479">Metal-binding</keyword>
<keyword id="KW-0488">Methylation</keyword>
<keyword id="KW-0496">Mitochondrion</keyword>
<keyword id="KW-0999">Mitochondrion inner membrane</keyword>
<keyword id="KW-0597">Phosphoprotein</keyword>
<keyword id="KW-1185">Reference proteome</keyword>
<keyword id="KW-0677">Repeat</keyword>
<keyword id="KW-0809">Transit peptide</keyword>
<keyword id="KW-0813">Transport</keyword>
<comment type="function">
    <text evidence="1 7 9 12 13">Calcium sensor of the mitochondrial calcium uniporter (MCU) channel, which senses calcium level via its EF-hand domains (PubMed:24560927, PubMed:27477272, PubMed:36206740). MICU1 and MICU2 (or MICU3) form a disulfide-linked heterodimer that stimulates and inhibits MCU activity, depending on the concentration of calcium (PubMed:24560927, PubMed:27477272, PubMed:36206740). At low calcium levels, MICU1 occludes the pore of the MCU channel, preventing mitochondrial calcium uptake (By similarity). At higher calcium levels, calcium-binding to MICU1 and MICU2 (or MICU3) induces a conformational change that weakens MCU-MICU1 interactions and moves the MICU1-MICU2 heterodimer away from the pore, allowing calcium permeation through the MCU channel (PubMed:24560927). Also required to protect against manganese toxicity by preventing manganese uptake by MCU: mechanistically, manganese-binding to its EF-hand domains does not induce any conformational change, maintaining MCU pore occlusion (By similarity). Acts as a regulator of mitochondrial cristae structure independently of its ability to regulate the mitochondrial calcium uniporter channel (PubMed:37098122). Regulates glucose-dependent insulin secretion in pancreatic beta-cells by regulating mitochondrial calcium uptake (By similarity). Induces T-helper 1-mediated autoreactivity, which is accompanied by the release of IFNG (By similarity).</text>
</comment>
<comment type="function">
    <molecule>Isoform 3</molecule>
    <text evidence="10">Isoform that regulates mitochondrial calcium uniporter (MCU) in the skeletal muscle (PubMed:27818145). Compared to other isoforms, this isoform has higher affinity for calcium, promoting mitochondrial calcium uptake at lower calcium concentrations (PubMed:27818145). This allows a rapid response of mitochondrial metabolism and ensures sustained ATP production needed for resistance and strenuous exercise (PubMed:27818145).</text>
</comment>
<comment type="subunit">
    <text evidence="1 6 7 12 13">Heterodimer; disulfide-linked; heterodimerizes with MICU2 or MICU3 (PubMed:23409044, PubMed:24560927). Homodimer; disulfide-linked (PubMed:36206740). Component of the uniplex complex, composed of MCU, EMRE/SMDT1, MICU1 and MICU2 (or MICU3) in a 4:4:1:1 stoichiometry (PubMed:36206740). The composition of calcium sensors within the uniplex complex can differ depending on tissues: a MICU1 homodimer can be present instead of the MICU1-MICU2 heterodimer in skeletal-muscle and kidney (PubMed:36206740). MICU1 is recruited to the uniplex complex by EMRE/SMDT1, and it associates with MCU at low calcium levels, occluding the pore of the MCU channel (PubMed:23409044). Associates with the MICOS complex (PubMed:37098122). Interacts with SLC25A23 (By similarity). Interacts with CHCHD4/MIA40; which introduces the interchain disulfide bond with MICU2 (By similarity). Interacts (when methylated) with UCP2; leading to decrease the calcium sensitivity of MICU1 (By similarity).</text>
</comment>
<comment type="subunit">
    <molecule>Isoform 3</molecule>
    <text evidence="1 10 14">Heterodimer; disulfide-linked; heterodimerizes with MICU2 or MICU3 (PubMed:27818145). Heterodimerizes with MICU3 in skeletal muscle (PubMed:38018177). Component of the uniplex complex, composed of MCU, EMRE/SMDT1, MICU1 and MICU2 (or MICU3) in a 4:4:1:1 stoichiometry (PubMed:27818145). Also localizes to mitochondrial cristae junctions (By similarity).</text>
</comment>
<comment type="subcellular location">
    <subcellularLocation>
        <location evidence="11">Mitochondrion intermembrane space</location>
    </subcellularLocation>
    <subcellularLocation>
        <location evidence="11">Mitochondrion inner membrane</location>
    </subcellularLocation>
    <text evidence="1">Recruited to the mitochondrial inner membrane by EMRE/SMDT1 (By similarity). Also localizes to mitochondrial cristae junctions (By similarity).</text>
</comment>
<comment type="subcellular location">
    <molecule>Isoform 3</molecule>
    <subcellularLocation>
        <location evidence="20">Mitochondrion intermembrane space</location>
    </subcellularLocation>
    <subcellularLocation>
        <location evidence="20">Mitochondrion inner membrane</location>
    </subcellularLocation>
</comment>
<comment type="alternative products">
    <event type="alternative splicing"/>
    <isoform>
        <id>Q8VCX5-1</id>
        <name>1</name>
        <sequence type="displayed"/>
    </isoform>
    <isoform>
        <id>Q8VCX5-2</id>
        <name>2</name>
        <sequence type="described" ref="VSP_031982"/>
    </isoform>
    <isoform>
        <id>Q8VCX5-3</id>
        <name>3</name>
        <name evidence="18">MICU1.1</name>
        <sequence type="described" ref="VSP_031983"/>
    </isoform>
</comment>
<comment type="tissue specificity">
    <text evidence="5 6">Expressed in skeletal muscle, heart, kidney, liver, brain, lung, fat and spleen.</text>
</comment>
<comment type="tissue specificity">
    <molecule>Isoform 3</molecule>
    <text evidence="10">Specifically expressed in the skeletal muscle.</text>
</comment>
<comment type="domain">
    <text evidence="7">The EF-hand domains have high affinity for calcium and act as sensors of calcium levels.</text>
</comment>
<comment type="domain">
    <text evidence="1">The polybasic region mediates interaction with EMRE/SMDT1 and association with the uniplex complex.</text>
</comment>
<comment type="domain">
    <text evidence="1">Lysine and arginine residues in the K/R-ring mediate electrostatic interactions with MCU and play a key role in MCU inhibition in absence of calcium.</text>
</comment>
<comment type="domain">
    <text evidence="1">The C-helix plays a key role in mitochondrial calcium uptake, probably by mediating interaction with MICU2.</text>
</comment>
<comment type="PTM">
    <text evidence="11">Phosphorylation at Ser-124 by AKT1 impairs its maturation and stability.</text>
</comment>
<comment type="PTM">
    <text evidence="1">Asymmetric dimethylation at Arg-457 by PRMT1 decreases the calcium sensitivity of MICU1 by promoting interaction with UCP2.</text>
</comment>
<comment type="PTM">
    <text evidence="1">Degraded by YME1L1 when not complexed as homodimer or heterodimer. Not degraded when complexed as homodimer or heterodimer; the presence of the interchain disulfide bond protecting MICU1 from degradation by YME1L1.</text>
</comment>
<comment type="disruption phenotype">
    <text evidence="8 9">Lethality during the first hours after birth in most cases: embryos are at the expected Mendelian ratio and death takes place only after birth (PubMed:26956930, PubMed:27477272). Some mice survive beyond the first postnatal week and show severe neurological and myopathic defects (PubMed:27477272). Cells display increased resting mitochondrial calcium levels, altered mitochondrial morphology and reduced ATP (PubMed:27477272). Cells also show disorganized mitochondrial architecture (PubMed:27477272).</text>
</comment>
<comment type="similarity">
    <text evidence="19">Belongs to the MICU1 family. MICU1 subfamily.</text>
</comment>